<organism>
    <name type="scientific">Marchantia polymorpha</name>
    <name type="common">Common liverwort</name>
    <name type="synonym">Marchantia aquatica</name>
    <dbReference type="NCBI Taxonomy" id="3197"/>
    <lineage>
        <taxon>Eukaryota</taxon>
        <taxon>Viridiplantae</taxon>
        <taxon>Streptophyta</taxon>
        <taxon>Embryophyta</taxon>
        <taxon>Marchantiophyta</taxon>
        <taxon>Marchantiopsida</taxon>
        <taxon>Marchantiidae</taxon>
        <taxon>Marchantiales</taxon>
        <taxon>Marchantiaceae</taxon>
        <taxon>Marchantia</taxon>
    </lineage>
</organism>
<proteinExistence type="inferred from homology"/>
<name>PSAI_MARPO</name>
<sequence length="36" mass="4018">MTASYLPSIFVPLVGLIFPAITMASLFIYIEQDEIL</sequence>
<evidence type="ECO:0000250" key="1"/>
<evidence type="ECO:0000255" key="2"/>
<evidence type="ECO:0000305" key="3"/>
<geneLocation type="chloroplast"/>
<keyword id="KW-0150">Chloroplast</keyword>
<keyword id="KW-0472">Membrane</keyword>
<keyword id="KW-0602">Photosynthesis</keyword>
<keyword id="KW-0603">Photosystem I</keyword>
<keyword id="KW-0934">Plastid</keyword>
<keyword id="KW-0793">Thylakoid</keyword>
<keyword id="KW-0812">Transmembrane</keyword>
<keyword id="KW-1133">Transmembrane helix</keyword>
<dbReference type="EMBL" id="X04465">
    <property type="protein sequence ID" value="CAA28094.1"/>
    <property type="molecule type" value="Genomic_DNA"/>
</dbReference>
<dbReference type="PIR" id="S01531">
    <property type="entry name" value="S01531"/>
</dbReference>
<dbReference type="RefSeq" id="NP_039308.1">
    <property type="nucleotide sequence ID" value="NC_001319.1"/>
</dbReference>
<dbReference type="RefSeq" id="YP_009646823.1">
    <property type="nucleotide sequence ID" value="NC_042505.1"/>
</dbReference>
<dbReference type="SMR" id="P12185"/>
<dbReference type="GeneID" id="2702597"/>
<dbReference type="GeneID" id="40386703"/>
<dbReference type="GO" id="GO:0009535">
    <property type="term" value="C:chloroplast thylakoid membrane"/>
    <property type="evidence" value="ECO:0007669"/>
    <property type="project" value="UniProtKB-SubCell"/>
</dbReference>
<dbReference type="GO" id="GO:0009522">
    <property type="term" value="C:photosystem I"/>
    <property type="evidence" value="ECO:0007669"/>
    <property type="project" value="UniProtKB-KW"/>
</dbReference>
<dbReference type="GO" id="GO:0015979">
    <property type="term" value="P:photosynthesis"/>
    <property type="evidence" value="ECO:0007669"/>
    <property type="project" value="UniProtKB-UniRule"/>
</dbReference>
<dbReference type="HAMAP" id="MF_00431">
    <property type="entry name" value="PSI_PsaI"/>
    <property type="match status" value="1"/>
</dbReference>
<dbReference type="InterPro" id="IPR001302">
    <property type="entry name" value="PSI_PsaI"/>
</dbReference>
<dbReference type="InterPro" id="IPR036357">
    <property type="entry name" value="PSI_PsaI_sf"/>
</dbReference>
<dbReference type="NCBIfam" id="NF008830">
    <property type="entry name" value="PRK11877.1"/>
    <property type="match status" value="1"/>
</dbReference>
<dbReference type="NCBIfam" id="TIGR03052">
    <property type="entry name" value="PS_I_psaI"/>
    <property type="match status" value="1"/>
</dbReference>
<dbReference type="PANTHER" id="PTHR35775">
    <property type="match status" value="1"/>
</dbReference>
<dbReference type="PANTHER" id="PTHR35775:SF2">
    <property type="entry name" value="PHOTOSYSTEM I REACTION CENTER SUBUNIT VIII"/>
    <property type="match status" value="1"/>
</dbReference>
<dbReference type="Pfam" id="PF00796">
    <property type="entry name" value="PSI_8"/>
    <property type="match status" value="1"/>
</dbReference>
<dbReference type="SUPFAM" id="SSF81540">
    <property type="entry name" value="Subunit VIII of photosystem I reaction centre, PsaI"/>
    <property type="match status" value="1"/>
</dbReference>
<comment type="function">
    <text>May help in the organization of the PsaL subunit.</text>
</comment>
<comment type="subcellular location">
    <subcellularLocation>
        <location evidence="1">Plastid</location>
        <location evidence="1">Chloroplast thylakoid membrane</location>
        <topology evidence="1">Single-pass membrane protein</topology>
    </subcellularLocation>
</comment>
<comment type="similarity">
    <text evidence="3">Belongs to the PsaI family.</text>
</comment>
<protein>
    <recommendedName>
        <fullName>Photosystem I reaction center subunit VIII</fullName>
        <shortName>PSI-I</shortName>
    </recommendedName>
</protein>
<feature type="chain" id="PRO_0000194659" description="Photosystem I reaction center subunit VIII">
    <location>
        <begin position="1"/>
        <end position="36"/>
    </location>
</feature>
<feature type="transmembrane region" description="Helical" evidence="2">
    <location>
        <begin position="10"/>
        <end position="30"/>
    </location>
</feature>
<accession>P12185</accession>
<reference key="1">
    <citation type="journal article" date="1988" name="J. Mol. Biol.">
        <title>Structure and organization of Marchantia polymorpha chloroplast genome. III. Gene organization of the large single copy region from rbcL to trnI(CAU).</title>
        <authorList>
            <person name="Fukuzawa H."/>
            <person name="Kohchi T."/>
            <person name="Sano T."/>
            <person name="Shirai H."/>
            <person name="Umesono K."/>
            <person name="Inokuchi H."/>
            <person name="Ozeki H."/>
            <person name="Ohyama K."/>
        </authorList>
    </citation>
    <scope>NUCLEOTIDE SEQUENCE [GENOMIC DNA]</scope>
</reference>
<reference key="2">
    <citation type="journal article" date="1986" name="Nature">
        <title>Chloroplast gene organization deduced from complete sequence of liverwort Marchantia polymorpha chloroplast DNA.</title>
        <authorList>
            <person name="Ohyama K."/>
            <person name="Fukuzawa H."/>
            <person name="Kohchi T."/>
            <person name="Shirai H."/>
            <person name="Sano T."/>
            <person name="Sano S."/>
            <person name="Umesono K."/>
            <person name="Shiki Y."/>
            <person name="Takeuchi M."/>
            <person name="Chang Z."/>
            <person name="Aota S."/>
            <person name="Inokuchi H."/>
            <person name="Ozeki H."/>
        </authorList>
    </citation>
    <scope>NUCLEOTIDE SEQUENCE [LARGE SCALE GENOMIC DNA]</scope>
</reference>
<gene>
    <name type="primary">psaI</name>
</gene>